<comment type="function">
    <text evidence="1">Transports trehalose monomycolate (TMM) to the cell wall. Flips TMM across the inner membrane. Membrane potential is not required for this function. Transports probably phosphatidylethanolamine (PE) as well. Contributes to membrane potential, cell wall composition, antibiotic susceptibility and fitness.</text>
</comment>
<comment type="subcellular location">
    <subcellularLocation>
        <location evidence="2">Cell inner membrane</location>
        <topology evidence="3">Multi-pass membrane protein</topology>
    </subcellularLocation>
    <subcellularLocation>
        <location evidence="1">Cell septum</location>
    </subcellularLocation>
    <subcellularLocation>
        <location evidence="1">Cell tip</location>
    </subcellularLocation>
</comment>
<comment type="similarity">
    <text evidence="5">Belongs to the resistance-nodulation-cell division (RND) (TC 2.A.6) family. MmpL subfamily.</text>
</comment>
<keyword id="KW-0997">Cell inner membrane</keyword>
<keyword id="KW-1003">Cell membrane</keyword>
<keyword id="KW-0961">Cell wall biogenesis/degradation</keyword>
<keyword id="KW-0445">Lipid transport</keyword>
<keyword id="KW-0472">Membrane</keyword>
<keyword id="KW-1185">Reference proteome</keyword>
<keyword id="KW-0812">Transmembrane</keyword>
<keyword id="KW-1133">Transmembrane helix</keyword>
<keyword id="KW-0813">Transport</keyword>
<evidence type="ECO:0000250" key="1">
    <source>
        <dbReference type="UniProtKB" id="A0QP27"/>
    </source>
</evidence>
<evidence type="ECO:0000250" key="2">
    <source>
        <dbReference type="UniProtKB" id="P9WJV5"/>
    </source>
</evidence>
<evidence type="ECO:0000255" key="3"/>
<evidence type="ECO:0000256" key="4">
    <source>
        <dbReference type="SAM" id="MobiDB-lite"/>
    </source>
</evidence>
<evidence type="ECO:0000305" key="5"/>
<sequence>MFAWWGRTVYRYRFIVIGITVALCLCGGVFGLSLGKHVTQSGFYDDSSQSVKASILGDQVYGRDRSGHIVAIFHAPDGKTVNDPAWAKKITDELNQFQRNNSNKVTGWAGYLRASDTTNTVVQGMATPDKKYTFVSIPLKGDDDDTILNNYKAIAPDLQKLDGGTVQLAGLDPIANALTSTIATDQRRMEVLALPLVAVVLFLVFGGVIAACLPVMVGGLSIAGALGILRFIALFGPVHFFAQPVVSLIGLGIAVDYGLFVVSRFREEIAEGYDTEAAVRRTVMTAGRTVTFSAVLIAASGASLLLLPQGFVKSLTYALIAAVTLAALLSITLLPACLAILAKHVDALGVRTLFRVPLLRNWRMSHACLNWLADRLQKTKTREEVEAGFWGKLVNFVMKRPLVFAIPIVIGMILLVIPLGNLSFGGMSEKYLPPNNAVRQSQEHFDQLFPGYRTNPLTLVIQTSNHQPVTDQEIADIRSKAMAISGFIEPDNNYVNMWQERTVAPGASKDPSVRVLQNGLINPNDASKKINELRSITPPKGLTVSVGGTPALEQDSIHSLVAQAPLMVIMLITTTMLLMFLAFGSFVLPIKAAVMSALTLGSTMGILTWIFVDGHLSKWLNFTPTPLMVVIIALVVAVGYGLATDYEVFLVSRMVEARAESMSTQEAVRIGTASTGRLITAAALVLAVVAGSFVFSDLVMMKYLAFGLMAALLLDATVVRMFLVPSVMKLLGDDCWWAPRWARLLQNRIGLGEIHLPDERRRPTVSGRPVRPPVTAASLAAPASRVPRGPTHPATLEPSQRARSGLASRPQIKRPQELPSGASTARIQMRPSQSVEATTTRLSVPGNAPTTAAVSSSQGVQAVPLAATRHPLPTPSPASGQTRAMPVPANRSSDNASETAEPTTALPIMRPQDNDSEVATEKLNALGQGDNSRQHRRATGGGISAQDLLRREGRL</sequence>
<dbReference type="EMBL" id="Z95398">
    <property type="protein sequence ID" value="CAB08813.1"/>
    <property type="molecule type" value="Genomic_DNA"/>
</dbReference>
<dbReference type="EMBL" id="AL583926">
    <property type="protein sequence ID" value="CAC32152.1"/>
    <property type="molecule type" value="Genomic_DNA"/>
</dbReference>
<dbReference type="PIR" id="B87237">
    <property type="entry name" value="B87237"/>
</dbReference>
<dbReference type="RefSeq" id="NP_302678.1">
    <property type="nucleotide sequence ID" value="NC_002677.1"/>
</dbReference>
<dbReference type="RefSeq" id="WP_010908997.1">
    <property type="nucleotide sequence ID" value="NC_002677.1"/>
</dbReference>
<dbReference type="SMR" id="O06081"/>
<dbReference type="STRING" id="272631.gene:17576486"/>
<dbReference type="KEGG" id="mle:ML2620"/>
<dbReference type="PATRIC" id="fig|272631.5.peg.5021"/>
<dbReference type="Leproma" id="ML2620"/>
<dbReference type="eggNOG" id="COG2409">
    <property type="taxonomic scope" value="Bacteria"/>
</dbReference>
<dbReference type="HOGENOM" id="CLU_005108_8_0_11"/>
<dbReference type="OrthoDB" id="7051771at2"/>
<dbReference type="Proteomes" id="UP000000806">
    <property type="component" value="Chromosome"/>
</dbReference>
<dbReference type="GO" id="GO:0030428">
    <property type="term" value="C:cell septum"/>
    <property type="evidence" value="ECO:0000250"/>
    <property type="project" value="UniProtKB"/>
</dbReference>
<dbReference type="GO" id="GO:0051286">
    <property type="term" value="C:cell tip"/>
    <property type="evidence" value="ECO:0000250"/>
    <property type="project" value="UniProtKB"/>
</dbReference>
<dbReference type="GO" id="GO:0005886">
    <property type="term" value="C:plasma membrane"/>
    <property type="evidence" value="ECO:0007669"/>
    <property type="project" value="UniProtKB-SubCell"/>
</dbReference>
<dbReference type="GO" id="GO:0008429">
    <property type="term" value="F:phosphatidylethanolamine binding"/>
    <property type="evidence" value="ECO:0000250"/>
    <property type="project" value="UniProtKB"/>
</dbReference>
<dbReference type="GO" id="GO:0042546">
    <property type="term" value="P:cell wall biogenesis"/>
    <property type="evidence" value="ECO:0000250"/>
    <property type="project" value="UniProtKB"/>
</dbReference>
<dbReference type="GO" id="GO:0071555">
    <property type="term" value="P:cell wall organization"/>
    <property type="evidence" value="ECO:0007669"/>
    <property type="project" value="UniProtKB-KW"/>
</dbReference>
<dbReference type="GO" id="GO:0006869">
    <property type="term" value="P:lipid transport"/>
    <property type="evidence" value="ECO:0007669"/>
    <property type="project" value="UniProtKB-KW"/>
</dbReference>
<dbReference type="GO" id="GO:0071768">
    <property type="term" value="P:mycolic acid biosynthetic process"/>
    <property type="evidence" value="ECO:0000250"/>
    <property type="project" value="UniProtKB"/>
</dbReference>
<dbReference type="GO" id="GO:0042391">
    <property type="term" value="P:regulation of membrane potential"/>
    <property type="evidence" value="ECO:0000250"/>
    <property type="project" value="UniProtKB"/>
</dbReference>
<dbReference type="GO" id="GO:0046677">
    <property type="term" value="P:response to antibiotic"/>
    <property type="evidence" value="ECO:0000250"/>
    <property type="project" value="UniProtKB"/>
</dbReference>
<dbReference type="Gene3D" id="1.20.1640.10">
    <property type="entry name" value="Multidrug efflux transporter AcrB transmembrane domain"/>
    <property type="match status" value="2"/>
</dbReference>
<dbReference type="InterPro" id="IPR004869">
    <property type="entry name" value="MMPL_dom"/>
</dbReference>
<dbReference type="InterPro" id="IPR050545">
    <property type="entry name" value="Mycobact_MmpL"/>
</dbReference>
<dbReference type="PANTHER" id="PTHR33406">
    <property type="entry name" value="MEMBRANE PROTEIN MJ1562-RELATED"/>
    <property type="match status" value="1"/>
</dbReference>
<dbReference type="PANTHER" id="PTHR33406:SF11">
    <property type="entry name" value="MEMBRANE PROTEIN SCO6666-RELATED"/>
    <property type="match status" value="1"/>
</dbReference>
<dbReference type="Pfam" id="PF03176">
    <property type="entry name" value="MMPL"/>
    <property type="match status" value="2"/>
</dbReference>
<dbReference type="SUPFAM" id="SSF82866">
    <property type="entry name" value="Multidrug efflux transporter AcrB transmembrane domain"/>
    <property type="match status" value="2"/>
</dbReference>
<organism>
    <name type="scientific">Mycobacterium leprae (strain TN)</name>
    <dbReference type="NCBI Taxonomy" id="272631"/>
    <lineage>
        <taxon>Bacteria</taxon>
        <taxon>Bacillati</taxon>
        <taxon>Actinomycetota</taxon>
        <taxon>Actinomycetes</taxon>
        <taxon>Mycobacteriales</taxon>
        <taxon>Mycobacteriaceae</taxon>
        <taxon>Mycobacterium</taxon>
    </lineage>
</organism>
<proteinExistence type="inferred from homology"/>
<reference key="1">
    <citation type="journal article" date="2001" name="Nature">
        <title>Massive gene decay in the leprosy bacillus.</title>
        <authorList>
            <person name="Cole S.T."/>
            <person name="Eiglmeier K."/>
            <person name="Parkhill J."/>
            <person name="James K.D."/>
            <person name="Thomson N.R."/>
            <person name="Wheeler P.R."/>
            <person name="Honore N."/>
            <person name="Garnier T."/>
            <person name="Churcher C.M."/>
            <person name="Harris D.E."/>
            <person name="Mungall K.L."/>
            <person name="Basham D."/>
            <person name="Brown D."/>
            <person name="Chillingworth T."/>
            <person name="Connor R."/>
            <person name="Davies R.M."/>
            <person name="Devlin K."/>
            <person name="Duthoy S."/>
            <person name="Feltwell T."/>
            <person name="Fraser A."/>
            <person name="Hamlin N."/>
            <person name="Holroyd S."/>
            <person name="Hornsby T."/>
            <person name="Jagels K."/>
            <person name="Lacroix C."/>
            <person name="Maclean J."/>
            <person name="Moule S."/>
            <person name="Murphy L.D."/>
            <person name="Oliver K."/>
            <person name="Quail M.A."/>
            <person name="Rajandream M.A."/>
            <person name="Rutherford K.M."/>
            <person name="Rutter S."/>
            <person name="Seeger K."/>
            <person name="Simon S."/>
            <person name="Simmonds M."/>
            <person name="Skelton J."/>
            <person name="Squares R."/>
            <person name="Squares S."/>
            <person name="Stevens K."/>
            <person name="Taylor K."/>
            <person name="Whitehead S."/>
            <person name="Woodward J.R."/>
            <person name="Barrell B.G."/>
        </authorList>
    </citation>
    <scope>NUCLEOTIDE SEQUENCE [LARGE SCALE GENOMIC DNA]</scope>
    <source>
        <strain>TN</strain>
    </source>
</reference>
<gene>
    <name type="primary">mmpL3</name>
    <name type="ordered locus">ML2620</name>
    <name type="ORF">MLCL622.18c</name>
</gene>
<accession>O06081</accession>
<feature type="chain" id="PRO_0000103565" description="Probable trehalose monomycolate exporter MmpL3">
    <location>
        <begin position="1"/>
        <end position="955"/>
    </location>
</feature>
<feature type="topological domain" description="Cytoplasmic" evidence="1">
    <location>
        <begin position="1"/>
        <end position="13"/>
    </location>
</feature>
<feature type="transmembrane region" description="Helical" evidence="3">
    <location>
        <begin position="14"/>
        <end position="34"/>
    </location>
</feature>
<feature type="topological domain" description="Periplasmic" evidence="1">
    <location>
        <begin position="35"/>
        <end position="190"/>
    </location>
</feature>
<feature type="transmembrane region" description="Helical" evidence="3">
    <location>
        <begin position="191"/>
        <end position="213"/>
    </location>
</feature>
<feature type="topological domain" description="Cytoplasmic" evidence="1">
    <location>
        <begin position="214"/>
        <end position="219"/>
    </location>
</feature>
<feature type="transmembrane region" description="Helical" evidence="3">
    <location>
        <begin position="220"/>
        <end position="236"/>
    </location>
</feature>
<feature type="topological domain" description="Periplasmic" evidence="1">
    <location>
        <begin position="237"/>
        <end position="244"/>
    </location>
</feature>
<feature type="transmembrane region" description="Helical" evidence="3">
    <location>
        <begin position="245"/>
        <end position="262"/>
    </location>
</feature>
<feature type="topological domain" description="Cytoplasmic" evidence="1">
    <location>
        <begin position="263"/>
        <end position="291"/>
    </location>
</feature>
<feature type="transmembrane region" description="Helical" evidence="3">
    <location>
        <begin position="292"/>
        <end position="312"/>
    </location>
</feature>
<feature type="topological domain" description="Periplasmic" evidence="1">
    <location>
        <begin position="313"/>
        <end position="319"/>
    </location>
</feature>
<feature type="transmembrane region" description="Helical" evidence="3">
    <location>
        <begin position="320"/>
        <end position="340"/>
    </location>
</feature>
<feature type="topological domain" description="Cytoplasmic" evidence="1">
    <location>
        <begin position="341"/>
        <end position="401"/>
    </location>
</feature>
<feature type="transmembrane region" description="Helical" evidence="3">
    <location>
        <begin position="402"/>
        <end position="422"/>
    </location>
</feature>
<feature type="topological domain" description="Periplasmic" evidence="1">
    <location>
        <begin position="423"/>
        <end position="567"/>
    </location>
</feature>
<feature type="transmembrane region" description="Helical" evidence="3">
    <location>
        <begin position="568"/>
        <end position="588"/>
    </location>
</feature>
<feature type="topological domain" description="Cytoplasmic" evidence="1">
    <location>
        <begin position="589"/>
        <end position="591"/>
    </location>
</feature>
<feature type="transmembrane region" description="Helical" evidence="3">
    <location>
        <begin position="592"/>
        <end position="612"/>
    </location>
</feature>
<feature type="topological domain" description="Periplasmic" evidence="1">
    <location>
        <begin position="613"/>
        <end position="621"/>
    </location>
</feature>
<feature type="transmembrane region" description="Helical" evidence="3">
    <location>
        <begin position="622"/>
        <end position="642"/>
    </location>
</feature>
<feature type="topological domain" description="Cytoplasmic" evidence="1">
    <location>
        <begin position="643"/>
        <end position="678"/>
    </location>
</feature>
<feature type="transmembrane region" description="Helical" evidence="3">
    <location>
        <begin position="679"/>
        <end position="699"/>
    </location>
</feature>
<feature type="topological domain" description="Periplasmic" evidence="1">
    <location>
        <begin position="700"/>
        <end position="703"/>
    </location>
</feature>
<feature type="transmembrane region" description="Helical" evidence="3">
    <location>
        <begin position="704"/>
        <end position="724"/>
    </location>
</feature>
<feature type="topological domain" description="Cytoplasmic" evidence="1">
    <location>
        <begin position="725"/>
        <end position="955"/>
    </location>
</feature>
<feature type="region of interest" description="Disordered" evidence="4">
    <location>
        <begin position="759"/>
        <end position="955"/>
    </location>
</feature>
<feature type="compositionally biased region" description="Polar residues" evidence="4">
    <location>
        <begin position="821"/>
        <end position="860"/>
    </location>
</feature>
<feature type="compositionally biased region" description="Polar residues" evidence="4">
    <location>
        <begin position="890"/>
        <end position="902"/>
    </location>
</feature>
<feature type="binding site" evidence="1">
    <location>
        <begin position="40"/>
        <end position="44"/>
    </location>
    <ligand>
        <name>a 1,2-diacylglycero-3-phosphoethanolamine</name>
        <dbReference type="ChEBI" id="CHEBI:57613"/>
    </ligand>
</feature>
<feature type="site" description="Part of the proton-transportation channel" evidence="1">
    <location>
        <position position="256"/>
    </location>
</feature>
<feature type="site" description="Part of the proton-transportation channel" evidence="1">
    <location>
        <position position="257"/>
    </location>
</feature>
<feature type="site" description="Part of the proton transportation network" evidence="1">
    <location>
        <position position="591"/>
    </location>
</feature>
<feature type="site" description="Part of the proton-transportation channel" evidence="1">
    <location>
        <position position="645"/>
    </location>
</feature>
<feature type="site" description="Part of the proton-transportation channel" evidence="1">
    <location>
        <position position="646"/>
    </location>
</feature>
<feature type="site" description="Part of the proton transportation network" evidence="1">
    <location>
        <position position="647"/>
    </location>
</feature>
<name>MMPL3_MYCLE</name>
<protein>
    <recommendedName>
        <fullName evidence="2">Probable trehalose monomycolate exporter MmpL3</fullName>
        <shortName evidence="2">TMM exporter MmpL3</shortName>
    </recommendedName>
    <alternativeName>
        <fullName evidence="5">MmpL3 transporter</fullName>
    </alternativeName>
    <alternativeName>
        <fullName evidence="5">Mycobacterial membrane protein large 3</fullName>
    </alternativeName>
</protein>